<organism>
    <name type="scientific">Blochmanniella pennsylvanica (strain BPEN)</name>
    <dbReference type="NCBI Taxonomy" id="291272"/>
    <lineage>
        <taxon>Bacteria</taxon>
        <taxon>Pseudomonadati</taxon>
        <taxon>Pseudomonadota</taxon>
        <taxon>Gammaproteobacteria</taxon>
        <taxon>Enterobacterales</taxon>
        <taxon>Enterobacteriaceae</taxon>
        <taxon>ant endosymbionts</taxon>
        <taxon>Candidatus Blochmanniella</taxon>
    </lineage>
</organism>
<evidence type="ECO:0000255" key="1">
    <source>
        <dbReference type="HAMAP-Rule" id="MF_00758"/>
    </source>
</evidence>
<name>Y258_BLOPB</name>
<protein>
    <recommendedName>
        <fullName evidence="1">UPF0301 protein BPEN_258</fullName>
    </recommendedName>
</protein>
<dbReference type="EMBL" id="CP000016">
    <property type="protein sequence ID" value="AAZ40889.1"/>
    <property type="molecule type" value="Genomic_DNA"/>
</dbReference>
<dbReference type="SMR" id="Q493F3"/>
<dbReference type="STRING" id="291272.BPEN_258"/>
<dbReference type="KEGG" id="bpn:BPEN_258"/>
<dbReference type="eggNOG" id="COG1678">
    <property type="taxonomic scope" value="Bacteria"/>
</dbReference>
<dbReference type="HOGENOM" id="CLU_057596_1_0_6"/>
<dbReference type="OrthoDB" id="9807486at2"/>
<dbReference type="Proteomes" id="UP000007794">
    <property type="component" value="Chromosome"/>
</dbReference>
<dbReference type="GO" id="GO:0005829">
    <property type="term" value="C:cytosol"/>
    <property type="evidence" value="ECO:0007669"/>
    <property type="project" value="TreeGrafter"/>
</dbReference>
<dbReference type="Gene3D" id="3.40.1740.10">
    <property type="entry name" value="VC0467-like"/>
    <property type="match status" value="1"/>
</dbReference>
<dbReference type="Gene3D" id="3.30.70.1300">
    <property type="entry name" value="VC0467-like domains"/>
    <property type="match status" value="1"/>
</dbReference>
<dbReference type="HAMAP" id="MF_00758">
    <property type="entry name" value="UPF0301"/>
    <property type="match status" value="1"/>
</dbReference>
<dbReference type="InterPro" id="IPR003774">
    <property type="entry name" value="AlgH-like"/>
</dbReference>
<dbReference type="NCBIfam" id="NF001266">
    <property type="entry name" value="PRK00228.1-1"/>
    <property type="match status" value="1"/>
</dbReference>
<dbReference type="PANTHER" id="PTHR30327">
    <property type="entry name" value="UNCHARACTERIZED PROTEIN YQGE"/>
    <property type="match status" value="1"/>
</dbReference>
<dbReference type="PANTHER" id="PTHR30327:SF1">
    <property type="entry name" value="UPF0301 PROTEIN YQGE"/>
    <property type="match status" value="1"/>
</dbReference>
<dbReference type="Pfam" id="PF02622">
    <property type="entry name" value="DUF179"/>
    <property type="match status" value="1"/>
</dbReference>
<dbReference type="SUPFAM" id="SSF143456">
    <property type="entry name" value="VC0467-like"/>
    <property type="match status" value="1"/>
</dbReference>
<keyword id="KW-1185">Reference proteome</keyword>
<comment type="similarity">
    <text evidence="1">Belongs to the UPF0301 (AlgH) family.</text>
</comment>
<reference key="1">
    <citation type="journal article" date="2005" name="Genome Res.">
        <title>Genome sequence of Blochmannia pennsylvanicus indicates parallel evolutionary trends among bacterial mutualists of insects.</title>
        <authorList>
            <person name="Degnan P.H."/>
            <person name="Lazarus A.B."/>
            <person name="Wernegreen J.J."/>
        </authorList>
    </citation>
    <scope>NUCLEOTIDE SEQUENCE [LARGE SCALE GENOMIC DNA]</scope>
    <source>
        <strain>BPEN</strain>
    </source>
</reference>
<sequence length="194" mass="21346">MLTPHKIINLQNHFLIAMPALQDPLFKQSVVYICEHNDAGAMGIVINKLVTRCTVETILNNLKIVSPTRDPSVRLDNPVFAGGPLLDDRGFILHTPIKGFGSSVNISSKAMITTSKDILETLGTPNQPKDVLVALGYSGWDKGQLEHELMENTWLTAPANETILFHTPIIDRWRAAAKILGIDIYNIADQTGHA</sequence>
<accession>Q493F3</accession>
<gene>
    <name type="ordered locus">BPEN_258</name>
</gene>
<feature type="chain" id="PRO_0000258802" description="UPF0301 protein BPEN_258">
    <location>
        <begin position="1"/>
        <end position="194"/>
    </location>
</feature>
<proteinExistence type="inferred from homology"/>